<reference key="1">
    <citation type="journal article" date="2007" name="Science">
        <title>Genome sequence of Aedes aegypti, a major arbovirus vector.</title>
        <authorList>
            <person name="Nene V."/>
            <person name="Wortman J.R."/>
            <person name="Lawson D."/>
            <person name="Haas B.J."/>
            <person name="Kodira C.D."/>
            <person name="Tu Z.J."/>
            <person name="Loftus B.J."/>
            <person name="Xi Z."/>
            <person name="Megy K."/>
            <person name="Grabherr M."/>
            <person name="Ren Q."/>
            <person name="Zdobnov E.M."/>
            <person name="Lobo N.F."/>
            <person name="Campbell K.S."/>
            <person name="Brown S.E."/>
            <person name="Bonaldo M.F."/>
            <person name="Zhu J."/>
            <person name="Sinkins S.P."/>
            <person name="Hogenkamp D.G."/>
            <person name="Amedeo P."/>
            <person name="Arensburger P."/>
            <person name="Atkinson P.W."/>
            <person name="Bidwell S.L."/>
            <person name="Biedler J."/>
            <person name="Birney E."/>
            <person name="Bruggner R.V."/>
            <person name="Costas J."/>
            <person name="Coy M.R."/>
            <person name="Crabtree J."/>
            <person name="Crawford M."/>
            <person name="DeBruyn B."/>
            <person name="DeCaprio D."/>
            <person name="Eiglmeier K."/>
            <person name="Eisenstadt E."/>
            <person name="El-Dorry H."/>
            <person name="Gelbart W.M."/>
            <person name="Gomes S.L."/>
            <person name="Hammond M."/>
            <person name="Hannick L.I."/>
            <person name="Hogan J.R."/>
            <person name="Holmes M.H."/>
            <person name="Jaffe D."/>
            <person name="Johnston S.J."/>
            <person name="Kennedy R.C."/>
            <person name="Koo H."/>
            <person name="Kravitz S."/>
            <person name="Kriventseva E.V."/>
            <person name="Kulp D."/>
            <person name="Labutti K."/>
            <person name="Lee E."/>
            <person name="Li S."/>
            <person name="Lovin D.D."/>
            <person name="Mao C."/>
            <person name="Mauceli E."/>
            <person name="Menck C.F."/>
            <person name="Miller J.R."/>
            <person name="Montgomery P."/>
            <person name="Mori A."/>
            <person name="Nascimento A.L."/>
            <person name="Naveira H.F."/>
            <person name="Nusbaum C."/>
            <person name="O'Leary S.B."/>
            <person name="Orvis J."/>
            <person name="Pertea M."/>
            <person name="Quesneville H."/>
            <person name="Reidenbach K.R."/>
            <person name="Rogers Y.-H.C."/>
            <person name="Roth C.W."/>
            <person name="Schneider J.R."/>
            <person name="Schatz M."/>
            <person name="Shumway M."/>
            <person name="Stanke M."/>
            <person name="Stinson E.O."/>
            <person name="Tubio J.M.C."/>
            <person name="Vanzee J.P."/>
            <person name="Verjovski-Almeida S."/>
            <person name="Werner D."/>
            <person name="White O.R."/>
            <person name="Wyder S."/>
            <person name="Zeng Q."/>
            <person name="Zhao Q."/>
            <person name="Zhao Y."/>
            <person name="Hill C.A."/>
            <person name="Raikhel A.S."/>
            <person name="Soares M.B."/>
            <person name="Knudson D.L."/>
            <person name="Lee N.H."/>
            <person name="Galagan J."/>
            <person name="Salzberg S.L."/>
            <person name="Paulsen I.T."/>
            <person name="Dimopoulos G."/>
            <person name="Collins F.H."/>
            <person name="Bruce B."/>
            <person name="Fraser-Liggett C.M."/>
            <person name="Severson D.W."/>
        </authorList>
    </citation>
    <scope>NUCLEOTIDE SEQUENCE [LARGE SCALE GENOMIC DNA]</scope>
    <source>
        <strain>LVPib12</strain>
    </source>
</reference>
<keyword id="KW-0963">Cytoplasm</keyword>
<keyword id="KW-1185">Reference proteome</keyword>
<keyword id="KW-0677">Repeat</keyword>
<keyword id="KW-0802">TPR repeat</keyword>
<accession>Q17N71</accession>
<evidence type="ECO:0000255" key="1">
    <source>
        <dbReference type="HAMAP-Rule" id="MF_03013"/>
    </source>
</evidence>
<evidence type="ECO:0000255" key="2">
    <source>
        <dbReference type="PROSITE-ProRule" id="PRU01167"/>
    </source>
</evidence>
<evidence type="ECO:0000256" key="3">
    <source>
        <dbReference type="SAM" id="MobiDB-lite"/>
    </source>
</evidence>
<sequence length="1442" mass="161577">MQFLSPQMEQKLHRATIHQITVSKTGDMPIRFRLRHLNYRNNKKQKNGKDKETTPPPTTTGAKEPLVNGHSAAVNGMNGHTSEGEQQKDKTAAEDKKKPDSDVMEIIQDTGFTVQILSPGVEPLSIQVSSMELVQEIHQLLMDREDTCHRTCFSLQLDGVTLDNFAELKNIEGLKEGSIIKVVEEPYTMREARIHVRHVRDLLKSMDPADAYNGVDCSSLTFLHTITQGDILEKKKGRSESVDCTPPEHIMPGAKDRPLLPLQPGVGKKGPQPLKVLTTSAWNPPPGPRKLHGDLMYLYVVTMEDKRFHISACPRGFFINQSSDDVFDPRPDNPSYLCHSLIDLLSQISPTFRRCFAQMQKKRTQRHPFERVATPYQVYTWSAPALEHTIDAIRAEDTFSSKLGYEEHIPGQTRDWNEELQTTRELPRETLPERLLRERAIFKVHSDFVTAATRGAMAVIDGNVMAINPGEDAKMQMFIWNNIFFSLGFDVRDHYKELGGDAAAFVAPRNDLHGVRVYSAVDVEGLYTLGTVVIDYRGYRVTAQSIIPGILEREQEQSVVYGSIDFGKTVLSHEKYLELLNNAGKHLKILPHSVLNEKEEEIELCSSVECKGIIGNDGRHYILDLLRTFPPDVNFLKLDEELSKDCKALGFPIEHKHKLSCLRQELLEAFVESRYLMFIKHAAFQLQQLNSAKLKQKQEAKDSKDSEKKEEPKAIEAAPVAKEPAKKDAAESNNNVESKEECPKKGSTDKAKDKSAGVPKVETEEAKKLMESLLSSDEKNESKEVVKRACEAVGSLKEYEFDIRFNPDVYSPGIKHVDNQSAANSLKKQKQLVKDAAEFLVKHQIPSFVHDCLDHTAAPMDGTTLTETLHSRGINVRYLGKVANLLAKIKQLEYLHTIAVSELIIRAAKHIFTSYMQNTEMMSMAAAISHFLNCFLTATTAVSHSGSLSESDALTKSGSSGGKQQRRQNKRSAGSKGGKPSFQCTQDNNEWQLLTPKSLWSQIEKELKSYWDYELLPAGAHDSADPVVSHYRLQKISLLRAFCLKTGVQILLREYNFEMKNKPTFGESDIVNVFPVVKHINPRASDAYNFYTTGQSKIQQGYFKDGYDLISEALNLLNNVYGAMHPENAQCLRMLARLSYIMGDPQEALAIQQRAVLMSERVNGIDHPYTIAEYAPLALYCFANSQISTALKLLYRARYLATIVCGENHPDIALLDSNISLILHAVGEYELSLRFLEHALALNIKYYGEKSLKVAVSYHLVARTQSCMGDFRSALNNEKETYAIYKQQLGETHEKTQESSECLRHLTQQAVVLQKKMNDIYSNGKLTSGLPPIHIQPPSMGSVLDMLNAINGIIFVQISSKEIANLKNEIEKRQKEGGTSEQAAAAQASQEEVDRMLTETMAKTAAGIPFEDHDKHELPVAAEASSSKQADNSSNASAQQVS</sequence>
<name>CLU_AEDAE</name>
<feature type="chain" id="PRO_0000366376" description="Clustered mitochondria protein homolog">
    <location>
        <begin position="1"/>
        <end position="1442"/>
    </location>
</feature>
<feature type="domain" description="Clu" evidence="2">
    <location>
        <begin position="394"/>
        <end position="636"/>
    </location>
</feature>
<feature type="repeat" description="TPR 1">
    <location>
        <begin position="1087"/>
        <end position="1120"/>
    </location>
</feature>
<feature type="repeat" description="TPR 2">
    <location>
        <begin position="1213"/>
        <end position="1246"/>
    </location>
</feature>
<feature type="repeat" description="TPR 3">
    <location>
        <begin position="1248"/>
        <end position="1281"/>
    </location>
</feature>
<feature type="region of interest" description="Disordered" evidence="3">
    <location>
        <begin position="38"/>
        <end position="100"/>
    </location>
</feature>
<feature type="region of interest" description="Disordered" evidence="3">
    <location>
        <begin position="237"/>
        <end position="258"/>
    </location>
</feature>
<feature type="region of interest" description="Disordered" evidence="3">
    <location>
        <begin position="696"/>
        <end position="763"/>
    </location>
</feature>
<feature type="region of interest" description="Disordered" evidence="3">
    <location>
        <begin position="949"/>
        <end position="984"/>
    </location>
</feature>
<feature type="region of interest" description="Disordered" evidence="3">
    <location>
        <begin position="1373"/>
        <end position="1442"/>
    </location>
</feature>
<feature type="compositionally biased region" description="Basic and acidic residues" evidence="3">
    <location>
        <begin position="82"/>
        <end position="100"/>
    </location>
</feature>
<feature type="compositionally biased region" description="Basic and acidic residues" evidence="3">
    <location>
        <begin position="696"/>
        <end position="714"/>
    </location>
</feature>
<feature type="compositionally biased region" description="Basic and acidic residues" evidence="3">
    <location>
        <begin position="737"/>
        <end position="763"/>
    </location>
</feature>
<feature type="compositionally biased region" description="Polar residues" evidence="3">
    <location>
        <begin position="949"/>
        <end position="958"/>
    </location>
</feature>
<feature type="compositionally biased region" description="Low complexity" evidence="3">
    <location>
        <begin position="1380"/>
        <end position="1390"/>
    </location>
</feature>
<feature type="compositionally biased region" description="Polar residues" evidence="3">
    <location>
        <begin position="1424"/>
        <end position="1442"/>
    </location>
</feature>
<dbReference type="EMBL" id="CH477201">
    <property type="protein sequence ID" value="EAT48183.1"/>
    <property type="molecule type" value="Genomic_DNA"/>
</dbReference>
<dbReference type="RefSeq" id="XP_001651007.1">
    <property type="nucleotide sequence ID" value="XM_001650957.1"/>
</dbReference>
<dbReference type="SMR" id="Q17N71"/>
<dbReference type="FunCoup" id="Q17N71">
    <property type="interactions" value="1680"/>
</dbReference>
<dbReference type="STRING" id="7159.Q17N71"/>
<dbReference type="PaxDb" id="7159-AAEL000794-PA"/>
<dbReference type="VEuPathDB" id="VectorBase:AAEL027504"/>
<dbReference type="eggNOG" id="KOG1839">
    <property type="taxonomic scope" value="Eukaryota"/>
</dbReference>
<dbReference type="HOGENOM" id="CLU_003256_1_0_1"/>
<dbReference type="InParanoid" id="Q17N71"/>
<dbReference type="OMA" id="HPVWDKD"/>
<dbReference type="OrthoDB" id="1414216at2759"/>
<dbReference type="PhylomeDB" id="Q17N71"/>
<dbReference type="Proteomes" id="UP000008820">
    <property type="component" value="Unassembled WGS sequence"/>
</dbReference>
<dbReference type="Proteomes" id="UP000682892">
    <property type="component" value="Unassembled WGS sequence"/>
</dbReference>
<dbReference type="GO" id="GO:0005737">
    <property type="term" value="C:cytoplasm"/>
    <property type="evidence" value="ECO:0007669"/>
    <property type="project" value="UniProtKB-SubCell"/>
</dbReference>
<dbReference type="GO" id="GO:0003729">
    <property type="term" value="F:mRNA binding"/>
    <property type="evidence" value="ECO:0007669"/>
    <property type="project" value="TreeGrafter"/>
</dbReference>
<dbReference type="GO" id="GO:0048312">
    <property type="term" value="P:intracellular distribution of mitochondria"/>
    <property type="evidence" value="ECO:0007669"/>
    <property type="project" value="TreeGrafter"/>
</dbReference>
<dbReference type="GO" id="GO:0007005">
    <property type="term" value="P:mitochondrion organization"/>
    <property type="evidence" value="ECO:0007669"/>
    <property type="project" value="UniProtKB-UniRule"/>
</dbReference>
<dbReference type="CDD" id="cd15466">
    <property type="entry name" value="CLU-central"/>
    <property type="match status" value="1"/>
</dbReference>
<dbReference type="FunFam" id="1.25.40.10:FF:000099">
    <property type="entry name" value="Clustered mitochondria protein homolog"/>
    <property type="match status" value="1"/>
</dbReference>
<dbReference type="FunFam" id="3.30.2280.10:FF:000002">
    <property type="entry name" value="Clustered mitochondria protein homolog"/>
    <property type="match status" value="1"/>
</dbReference>
<dbReference type="Gene3D" id="3.30.2280.10">
    <property type="entry name" value="Hypothetical protein (hspc210)"/>
    <property type="match status" value="1"/>
</dbReference>
<dbReference type="Gene3D" id="1.25.40.10">
    <property type="entry name" value="Tetratricopeptide repeat domain"/>
    <property type="match status" value="1"/>
</dbReference>
<dbReference type="HAMAP" id="MF_03013">
    <property type="entry name" value="CLU"/>
    <property type="match status" value="1"/>
</dbReference>
<dbReference type="InterPro" id="IPR033646">
    <property type="entry name" value="CLU-central"/>
</dbReference>
<dbReference type="InterPro" id="IPR025697">
    <property type="entry name" value="CLU_dom"/>
</dbReference>
<dbReference type="InterPro" id="IPR028275">
    <property type="entry name" value="CLU_N"/>
</dbReference>
<dbReference type="InterPro" id="IPR027523">
    <property type="entry name" value="CLU_prot"/>
</dbReference>
<dbReference type="InterPro" id="IPR023231">
    <property type="entry name" value="GSKIP_dom_sf"/>
</dbReference>
<dbReference type="InterPro" id="IPR011990">
    <property type="entry name" value="TPR-like_helical_dom_sf"/>
</dbReference>
<dbReference type="PANTHER" id="PTHR12601:SF6">
    <property type="entry name" value="CLUSTERED MITOCHONDRIA PROTEIN HOMOLOG"/>
    <property type="match status" value="1"/>
</dbReference>
<dbReference type="PANTHER" id="PTHR12601">
    <property type="entry name" value="EUKARYOTIC TRANSLATION INITIATION FACTOR 3 SUBUNIT EIF-3"/>
    <property type="match status" value="1"/>
</dbReference>
<dbReference type="Pfam" id="PF13236">
    <property type="entry name" value="CLU"/>
    <property type="match status" value="1"/>
</dbReference>
<dbReference type="Pfam" id="PF15044">
    <property type="entry name" value="CLU_N"/>
    <property type="match status" value="1"/>
</dbReference>
<dbReference type="Pfam" id="PF12807">
    <property type="entry name" value="eIF3_p135"/>
    <property type="match status" value="1"/>
</dbReference>
<dbReference type="Pfam" id="PF13374">
    <property type="entry name" value="TPR_10"/>
    <property type="match status" value="1"/>
</dbReference>
<dbReference type="Pfam" id="PF13424">
    <property type="entry name" value="TPR_12"/>
    <property type="match status" value="1"/>
</dbReference>
<dbReference type="SUPFAM" id="SSF103107">
    <property type="entry name" value="Hypothetical protein c14orf129, hspc210"/>
    <property type="match status" value="1"/>
</dbReference>
<dbReference type="SUPFAM" id="SSF48452">
    <property type="entry name" value="TPR-like"/>
    <property type="match status" value="2"/>
</dbReference>
<dbReference type="PROSITE" id="PS51823">
    <property type="entry name" value="CLU"/>
    <property type="match status" value="1"/>
</dbReference>
<gene>
    <name type="ORF">AAEL000794</name>
</gene>
<proteinExistence type="inferred from homology"/>
<comment type="function">
    <text evidence="1">mRNA-binding protein involved in proper cytoplasmic distribution of mitochondria.</text>
</comment>
<comment type="subcellular location">
    <subcellularLocation>
        <location evidence="1">Cytoplasm</location>
    </subcellularLocation>
</comment>
<comment type="similarity">
    <text evidence="1">Belongs to the CLU family.</text>
</comment>
<organism>
    <name type="scientific">Aedes aegypti</name>
    <name type="common">Yellowfever mosquito</name>
    <name type="synonym">Culex aegypti</name>
    <dbReference type="NCBI Taxonomy" id="7159"/>
    <lineage>
        <taxon>Eukaryota</taxon>
        <taxon>Metazoa</taxon>
        <taxon>Ecdysozoa</taxon>
        <taxon>Arthropoda</taxon>
        <taxon>Hexapoda</taxon>
        <taxon>Insecta</taxon>
        <taxon>Pterygota</taxon>
        <taxon>Neoptera</taxon>
        <taxon>Endopterygota</taxon>
        <taxon>Diptera</taxon>
        <taxon>Nematocera</taxon>
        <taxon>Culicoidea</taxon>
        <taxon>Culicidae</taxon>
        <taxon>Culicinae</taxon>
        <taxon>Aedini</taxon>
        <taxon>Aedes</taxon>
        <taxon>Stegomyia</taxon>
    </lineage>
</organism>
<protein>
    <recommendedName>
        <fullName evidence="1">Clustered mitochondria protein homolog</fullName>
    </recommendedName>
</protein>